<accession>Q9XXD2</accession>
<feature type="chain" id="PRO_0000459065" description="Exosome complex component CSL4 homolog">
    <location>
        <begin position="1"/>
        <end position="208"/>
    </location>
</feature>
<proteinExistence type="evidence at transcript level"/>
<sequence>MLAETLVAPGDKVLDAIGEYRMGKGLYEANRRIFASVAGFVNVYGFRDKSDNLVQVIEVRRSEDQLDNELLPFHGAIVTAKVMAVGLRFAKCDIISIGDKVYKKRFSALLPKKKLRPLEPELSEPFKNFVRPNDYILAKVCEDAEIKDKFVLSIAEDELGVVLCRGRFGEPMQKVDWNTVVSTRTGKTEPRKMAKVPQKCTLPTQSVA</sequence>
<name>EXOS1_CAEEL</name>
<gene>
    <name evidence="7" type="primary">exos-1</name>
    <name evidence="7" type="ORF">Y48A6B.5</name>
</gene>
<dbReference type="EMBL" id="BX284603">
    <property type="protein sequence ID" value="CAA19529.1"/>
    <property type="molecule type" value="Genomic_DNA"/>
</dbReference>
<dbReference type="PIR" id="T26982">
    <property type="entry name" value="T26982"/>
</dbReference>
<dbReference type="RefSeq" id="NP_499416.1">
    <property type="nucleotide sequence ID" value="NM_067015.8"/>
</dbReference>
<dbReference type="SMR" id="Q9XXD2"/>
<dbReference type="FunCoup" id="Q9XXD2">
    <property type="interactions" value="2415"/>
</dbReference>
<dbReference type="STRING" id="6239.Y48A6B.5.1"/>
<dbReference type="PaxDb" id="6239-Y48A6B.5"/>
<dbReference type="PeptideAtlas" id="Q9XXD2"/>
<dbReference type="EnsemblMetazoa" id="Y48A6B.5.1">
    <property type="protein sequence ID" value="Y48A6B.5.1"/>
    <property type="gene ID" value="WBGene00012966"/>
</dbReference>
<dbReference type="GeneID" id="176532"/>
<dbReference type="KEGG" id="cel:CELE_Y48A6B.5"/>
<dbReference type="UCSC" id="Y48A6B.5">
    <property type="organism name" value="c. elegans"/>
</dbReference>
<dbReference type="AGR" id="WB:WBGene00012966"/>
<dbReference type="CTD" id="176532"/>
<dbReference type="WormBase" id="Y48A6B.5">
    <property type="protein sequence ID" value="CE19188"/>
    <property type="gene ID" value="WBGene00012966"/>
    <property type="gene designation" value="exos-1"/>
</dbReference>
<dbReference type="eggNOG" id="KOG3409">
    <property type="taxonomic scope" value="Eukaryota"/>
</dbReference>
<dbReference type="GeneTree" id="ENSGT00390000015287"/>
<dbReference type="HOGENOM" id="CLU_067135_3_0_1"/>
<dbReference type="InParanoid" id="Q9XXD2"/>
<dbReference type="OMA" id="LRFAKCD"/>
<dbReference type="OrthoDB" id="440760at2759"/>
<dbReference type="PhylomeDB" id="Q9XXD2"/>
<dbReference type="Reactome" id="R-CEL-429958">
    <property type="pathway name" value="mRNA decay by 3' to 5' exoribonuclease"/>
</dbReference>
<dbReference type="Reactome" id="R-CEL-450385">
    <property type="pathway name" value="Butyrate Response Factor 1 (BRF1) binds and destabilizes mRNA"/>
</dbReference>
<dbReference type="Reactome" id="R-CEL-450513">
    <property type="pathway name" value="Tristetraprolin (TTP, ZFP36) binds and destabilizes mRNA"/>
</dbReference>
<dbReference type="Reactome" id="R-CEL-6791226">
    <property type="pathway name" value="Major pathway of rRNA processing in the nucleolus and cytosol"/>
</dbReference>
<dbReference type="PRO" id="PR:Q9XXD2"/>
<dbReference type="Proteomes" id="UP000001940">
    <property type="component" value="Chromosome III"/>
</dbReference>
<dbReference type="Bgee" id="WBGene00012966">
    <property type="expression patterns" value="Expressed in embryo and 4 other cell types or tissues"/>
</dbReference>
<dbReference type="GO" id="GO:0005737">
    <property type="term" value="C:cytoplasm"/>
    <property type="evidence" value="ECO:0000314"/>
    <property type="project" value="WormBase"/>
</dbReference>
<dbReference type="GO" id="GO:0000176">
    <property type="term" value="C:nuclear exosome (RNase complex)"/>
    <property type="evidence" value="ECO:0000318"/>
    <property type="project" value="GO_Central"/>
</dbReference>
<dbReference type="GO" id="GO:0005730">
    <property type="term" value="C:nucleolus"/>
    <property type="evidence" value="ECO:0007669"/>
    <property type="project" value="UniProtKB-SubCell"/>
</dbReference>
<dbReference type="GO" id="GO:0005654">
    <property type="term" value="C:nucleoplasm"/>
    <property type="evidence" value="ECO:0007669"/>
    <property type="project" value="UniProtKB-SubCell"/>
</dbReference>
<dbReference type="GO" id="GO:0005634">
    <property type="term" value="C:nucleus"/>
    <property type="evidence" value="ECO:0000314"/>
    <property type="project" value="WormBase"/>
</dbReference>
<dbReference type="GO" id="GO:0006364">
    <property type="term" value="P:rRNA processing"/>
    <property type="evidence" value="ECO:0007669"/>
    <property type="project" value="UniProtKB-KW"/>
</dbReference>
<dbReference type="FunFam" id="2.40.50.140:FF:000610">
    <property type="entry name" value="EXOSome (Multiexonuclease complex) component"/>
    <property type="match status" value="1"/>
</dbReference>
<dbReference type="Gene3D" id="2.40.50.100">
    <property type="match status" value="1"/>
</dbReference>
<dbReference type="Gene3D" id="2.40.50.140">
    <property type="entry name" value="Nucleic acid-binding proteins"/>
    <property type="match status" value="1"/>
</dbReference>
<dbReference type="InterPro" id="IPR039771">
    <property type="entry name" value="Csl4"/>
</dbReference>
<dbReference type="InterPro" id="IPR025721">
    <property type="entry name" value="Exosome_cplx_N_dom"/>
</dbReference>
<dbReference type="InterPro" id="IPR012340">
    <property type="entry name" value="NA-bd_OB-fold"/>
</dbReference>
<dbReference type="PANTHER" id="PTHR12686">
    <property type="entry name" value="3'-5' EXORIBONUCLEASE CSL4-RELATED"/>
    <property type="match status" value="1"/>
</dbReference>
<dbReference type="PANTHER" id="PTHR12686:SF8">
    <property type="entry name" value="EXOSOME COMPLEX COMPONENT CSL4"/>
    <property type="match status" value="1"/>
</dbReference>
<dbReference type="Pfam" id="PF14382">
    <property type="entry name" value="ECR1_N"/>
    <property type="match status" value="1"/>
</dbReference>
<dbReference type="SUPFAM" id="SSF50249">
    <property type="entry name" value="Nucleic acid-binding proteins"/>
    <property type="match status" value="1"/>
</dbReference>
<dbReference type="SUPFAM" id="SSF110324">
    <property type="entry name" value="Ribosomal L27 protein-like"/>
    <property type="match status" value="1"/>
</dbReference>
<reference evidence="6" key="1">
    <citation type="journal article" date="1998" name="Science">
        <title>Genome sequence of the nematode C. elegans: a platform for investigating biology.</title>
        <authorList>
            <consortium name="The C. elegans sequencing consortium"/>
        </authorList>
    </citation>
    <scope>NUCLEOTIDE SEQUENCE [LARGE SCALE GENOMIC DNA]</scope>
    <source>
        <strain evidence="6">Bristol N2</strain>
    </source>
</reference>
<reference evidence="4" key="2">
    <citation type="journal article" date="2021" name="Nucleic Acids Res.">
        <title>Antisense ribosomal siRNAs inhibit RNA polymerase I-directed transcription in C. elegans.</title>
        <authorList>
            <person name="Liao S."/>
            <person name="Chen X."/>
            <person name="Xu T."/>
            <person name="Jin Q."/>
            <person name="Xu Z."/>
            <person name="Xu D."/>
            <person name="Zhou X."/>
            <person name="Zhu C."/>
            <person name="Guang S."/>
            <person name="Feng X."/>
        </authorList>
    </citation>
    <scope>FUNCTION</scope>
    <scope>SUBCELLULAR LOCATION</scope>
    <scope>TISSUE SPECIFICITY</scope>
</reference>
<reference evidence="4" key="3">
    <citation type="journal article" date="2023" name="PLoS Genet.">
        <title>A ZTF-7/RPS-2 complex mediates the cold-warm response in C. elegans.</title>
        <authorList>
            <person name="Xu T."/>
            <person name="Liao S."/>
            <person name="Huang M."/>
            <person name="Zhu C."/>
            <person name="Huang X."/>
            <person name="Jin Q."/>
            <person name="Xu D."/>
            <person name="Fu C."/>
            <person name="Chen X."/>
            <person name="Feng X."/>
            <person name="Guang S."/>
        </authorList>
    </citation>
    <scope>FUNCTION</scope>
    <scope>SUBCELLULAR LOCATION</scope>
</reference>
<organism evidence="6">
    <name type="scientific">Caenorhabditis elegans</name>
    <dbReference type="NCBI Taxonomy" id="6239"/>
    <lineage>
        <taxon>Eukaryota</taxon>
        <taxon>Metazoa</taxon>
        <taxon>Ecdysozoa</taxon>
        <taxon>Nematoda</taxon>
        <taxon>Chromadorea</taxon>
        <taxon>Rhabditida</taxon>
        <taxon>Rhabditina</taxon>
        <taxon>Rhabditomorpha</taxon>
        <taxon>Rhabditoidea</taxon>
        <taxon>Rhabditidae</taxon>
        <taxon>Peloderinae</taxon>
        <taxon>Caenorhabditis</taxon>
    </lineage>
</organism>
<evidence type="ECO:0000250" key="1">
    <source>
        <dbReference type="UniProtKB" id="Q9Y3B2"/>
    </source>
</evidence>
<evidence type="ECO:0000269" key="2">
    <source>
    </source>
</evidence>
<evidence type="ECO:0000269" key="3">
    <source>
    </source>
</evidence>
<evidence type="ECO:0000305" key="4"/>
<evidence type="ECO:0000305" key="5">
    <source>
    </source>
</evidence>
<evidence type="ECO:0000312" key="6">
    <source>
        <dbReference type="Proteomes" id="UP000001940"/>
    </source>
</evidence>
<evidence type="ECO:0000312" key="7">
    <source>
        <dbReference type="WormBase" id="Y48A6B.5"/>
    </source>
</evidence>
<protein>
    <recommendedName>
        <fullName evidence="4">Exosome complex component CSL4 homolog</fullName>
    </recommendedName>
</protein>
<keyword id="KW-0271">Exosome</keyword>
<keyword id="KW-0539">Nucleus</keyword>
<keyword id="KW-1185">Reference proteome</keyword>
<keyword id="KW-0698">rRNA processing</keyword>
<comment type="function">
    <text evidence="2 3 5">Non-catalytic component of the RNA exosome complex which has 3'-&gt;5' exoribonuclease activity and participates in a multitude of cellular RNA processing and degradation events (Probable). Involved in regulation of antisense ribosomal siRNA production (PubMed:34365510). Involved in response to cold-warm shock (PubMed:36763670).</text>
</comment>
<comment type="subunit">
    <text evidence="1">Component of the RNA exosome complex.</text>
</comment>
<comment type="subcellular location">
    <subcellularLocation>
        <location evidence="2 3">Nucleus</location>
    </subcellularLocation>
    <subcellularLocation>
        <location evidence="2 3">Nucleus</location>
        <location evidence="2 3">Nucleolus</location>
    </subcellularLocation>
    <subcellularLocation>
        <location evidence="3">Nucleus</location>
        <location evidence="3">Nucleoplasm</location>
    </subcellularLocation>
    <text evidence="3">As a part of exosome complex, translocates from the nucleolus to nucleoplasm in response to cold-warm shock.</text>
</comment>
<comment type="tissue specificity">
    <text evidence="2">Ubiquitously expressed.</text>
</comment>